<sequence>MSNQERQERPEKDPDLRSTEVTEGYEKAPHRAMFRAMGYDDEDLSSPMIGVANPAADITPCNVHLDDVADAAYDGIDDTEGMPIEFGTITISDAISMGTEGMKASLISREIIADSVELVTFGERMDGIVTIGGCDKNMPGMMMAAIRTDLPSVFLYGGSIMPGEHDGREVTIQNVFEGVGAVADGEMSEGELDEMERHACPGAGSCGGMFTANTMASISEALGFAPLGSASPPAEHESRYEEARRAGELAVEVVQERRSPSDFLTRESFENAIALQVAVGGSTNAVLHLLALAAEAGIDLDIETFNEISARTPKIADLQPGGERVMNDLHEVGGVPVVLRALNDAGLLHGDALTVTGNTIAEELEQIDPPTVEDLDVDYLNTVEDPIHERGAIRILSGNLAPDGAVIKITGEDHLHHEGPVRVFEQEEGAMEYVQEGHVESGDVICIRNEGPQGGPGMREMLGVTSAVAGQGHAEDVALFTDGRFSGATRGFSIGHVAPEAFVGGPIAALEDGDTITIDIDDHELSVDLTEDEMQQRLEGHDPEPTYDSGVLAKYHNDFGSAANGAVTNPGAKWD</sequence>
<reference key="1">
    <citation type="journal article" date="2004" name="Genome Res.">
        <title>Genome sequence of Haloarcula marismortui: a halophilic archaeon from the Dead Sea.</title>
        <authorList>
            <person name="Baliga N.S."/>
            <person name="Bonneau R."/>
            <person name="Facciotti M.T."/>
            <person name="Pan M."/>
            <person name="Glusman G."/>
            <person name="Deutsch E.W."/>
            <person name="Shannon P."/>
            <person name="Chiu Y."/>
            <person name="Weng R.S."/>
            <person name="Gan R.R."/>
            <person name="Hung P."/>
            <person name="Date S.V."/>
            <person name="Marcotte E."/>
            <person name="Hood L."/>
            <person name="Ng W.V."/>
        </authorList>
    </citation>
    <scope>NUCLEOTIDE SEQUENCE [LARGE SCALE GENOMIC DNA]</scope>
    <source>
        <strain>ATCC 43049 / DSM 3752 / JCM 8966 / VKM B-1809</strain>
    </source>
</reference>
<organism>
    <name type="scientific">Haloarcula marismortui (strain ATCC 43049 / DSM 3752 / JCM 8966 / VKM B-1809)</name>
    <name type="common">Halobacterium marismortui</name>
    <dbReference type="NCBI Taxonomy" id="272569"/>
    <lineage>
        <taxon>Archaea</taxon>
        <taxon>Methanobacteriati</taxon>
        <taxon>Methanobacteriota</taxon>
        <taxon>Stenosarchaea group</taxon>
        <taxon>Halobacteria</taxon>
        <taxon>Halobacteriales</taxon>
        <taxon>Haloarculaceae</taxon>
        <taxon>Haloarcula</taxon>
    </lineage>
</organism>
<accession>Q5V545</accession>
<dbReference type="EC" id="4.2.1.9" evidence="1"/>
<dbReference type="EMBL" id="AY596297">
    <property type="protein sequence ID" value="AAV45357.1"/>
    <property type="molecule type" value="Genomic_DNA"/>
</dbReference>
<dbReference type="RefSeq" id="WP_011222950.1">
    <property type="nucleotide sequence ID" value="NC_006396.1"/>
</dbReference>
<dbReference type="SMR" id="Q5V545"/>
<dbReference type="STRING" id="272569.rrnAC0302"/>
<dbReference type="PaxDb" id="272569-rrnAC0302"/>
<dbReference type="EnsemblBacteria" id="AAV45357">
    <property type="protein sequence ID" value="AAV45357"/>
    <property type="gene ID" value="rrnAC0302"/>
</dbReference>
<dbReference type="GeneID" id="40154596"/>
<dbReference type="KEGG" id="hma:rrnAC0302"/>
<dbReference type="PATRIC" id="fig|272569.17.peg.1096"/>
<dbReference type="eggNOG" id="arCOG04045">
    <property type="taxonomic scope" value="Archaea"/>
</dbReference>
<dbReference type="HOGENOM" id="CLU_014271_4_2_2"/>
<dbReference type="UniPathway" id="UPA00047">
    <property type="reaction ID" value="UER00057"/>
</dbReference>
<dbReference type="UniPathway" id="UPA00049">
    <property type="reaction ID" value="UER00061"/>
</dbReference>
<dbReference type="Proteomes" id="UP000001169">
    <property type="component" value="Chromosome I"/>
</dbReference>
<dbReference type="GO" id="GO:0051537">
    <property type="term" value="F:2 iron, 2 sulfur cluster binding"/>
    <property type="evidence" value="ECO:0007669"/>
    <property type="project" value="UniProtKB-UniRule"/>
</dbReference>
<dbReference type="GO" id="GO:0004160">
    <property type="term" value="F:dihydroxy-acid dehydratase activity"/>
    <property type="evidence" value="ECO:0007669"/>
    <property type="project" value="UniProtKB-UniRule"/>
</dbReference>
<dbReference type="GO" id="GO:0000287">
    <property type="term" value="F:magnesium ion binding"/>
    <property type="evidence" value="ECO:0007669"/>
    <property type="project" value="UniProtKB-UniRule"/>
</dbReference>
<dbReference type="GO" id="GO:0009097">
    <property type="term" value="P:isoleucine biosynthetic process"/>
    <property type="evidence" value="ECO:0007669"/>
    <property type="project" value="UniProtKB-UniRule"/>
</dbReference>
<dbReference type="GO" id="GO:0009099">
    <property type="term" value="P:L-valine biosynthetic process"/>
    <property type="evidence" value="ECO:0007669"/>
    <property type="project" value="UniProtKB-UniRule"/>
</dbReference>
<dbReference type="FunFam" id="3.50.30.80:FF:000001">
    <property type="entry name" value="Dihydroxy-acid dehydratase"/>
    <property type="match status" value="1"/>
</dbReference>
<dbReference type="Gene3D" id="3.50.30.80">
    <property type="entry name" value="IlvD/EDD C-terminal domain-like"/>
    <property type="match status" value="1"/>
</dbReference>
<dbReference type="HAMAP" id="MF_00012">
    <property type="entry name" value="IlvD"/>
    <property type="match status" value="1"/>
</dbReference>
<dbReference type="InterPro" id="IPR050165">
    <property type="entry name" value="DHAD_IlvD/Edd"/>
</dbReference>
<dbReference type="InterPro" id="IPR042096">
    <property type="entry name" value="Dihydro-acid_dehy_C"/>
</dbReference>
<dbReference type="InterPro" id="IPR004404">
    <property type="entry name" value="DihydroxyA_deHydtase"/>
</dbReference>
<dbReference type="InterPro" id="IPR020558">
    <property type="entry name" value="DiOHA_6PGluconate_deHydtase_CS"/>
</dbReference>
<dbReference type="InterPro" id="IPR056740">
    <property type="entry name" value="ILV_EDD_C"/>
</dbReference>
<dbReference type="InterPro" id="IPR000581">
    <property type="entry name" value="ILV_EDD_N"/>
</dbReference>
<dbReference type="InterPro" id="IPR037237">
    <property type="entry name" value="IlvD/EDD_N"/>
</dbReference>
<dbReference type="NCBIfam" id="TIGR00110">
    <property type="entry name" value="ilvD"/>
    <property type="match status" value="1"/>
</dbReference>
<dbReference type="NCBIfam" id="NF002068">
    <property type="entry name" value="PRK00911.1"/>
    <property type="match status" value="1"/>
</dbReference>
<dbReference type="PANTHER" id="PTHR21000">
    <property type="entry name" value="DIHYDROXY-ACID DEHYDRATASE DAD"/>
    <property type="match status" value="1"/>
</dbReference>
<dbReference type="PANTHER" id="PTHR21000:SF5">
    <property type="entry name" value="DIHYDROXY-ACID DEHYDRATASE, MITOCHONDRIAL"/>
    <property type="match status" value="1"/>
</dbReference>
<dbReference type="Pfam" id="PF24877">
    <property type="entry name" value="ILV_EDD_C"/>
    <property type="match status" value="1"/>
</dbReference>
<dbReference type="Pfam" id="PF00920">
    <property type="entry name" value="ILVD_EDD_N"/>
    <property type="match status" value="1"/>
</dbReference>
<dbReference type="SUPFAM" id="SSF143975">
    <property type="entry name" value="IlvD/EDD N-terminal domain-like"/>
    <property type="match status" value="1"/>
</dbReference>
<dbReference type="SUPFAM" id="SSF52016">
    <property type="entry name" value="LeuD/IlvD-like"/>
    <property type="match status" value="1"/>
</dbReference>
<dbReference type="PROSITE" id="PS00886">
    <property type="entry name" value="ILVD_EDD_1"/>
    <property type="match status" value="1"/>
</dbReference>
<dbReference type="PROSITE" id="PS00887">
    <property type="entry name" value="ILVD_EDD_2"/>
    <property type="match status" value="1"/>
</dbReference>
<protein>
    <recommendedName>
        <fullName evidence="1">Dihydroxy-acid dehydratase</fullName>
        <shortName evidence="1">DAD</shortName>
        <ecNumber evidence="1">4.2.1.9</ecNumber>
    </recommendedName>
</protein>
<proteinExistence type="inferred from homology"/>
<comment type="function">
    <text evidence="1">Functions in the biosynthesis of branched-chain amino acids. Catalyzes the dehydration of (2R,3R)-2,3-dihydroxy-3-methylpentanoate (2,3-dihydroxy-3-methylvalerate) into 2-oxo-3-methylpentanoate (2-oxo-3-methylvalerate) and of (2R)-2,3-dihydroxy-3-methylbutanoate (2,3-dihydroxyisovalerate) into 2-oxo-3-methylbutanoate (2-oxoisovalerate), the penultimate precursor to L-isoleucine and L-valine, respectively.</text>
</comment>
<comment type="catalytic activity">
    <reaction evidence="1">
        <text>(2R)-2,3-dihydroxy-3-methylbutanoate = 3-methyl-2-oxobutanoate + H2O</text>
        <dbReference type="Rhea" id="RHEA:24809"/>
        <dbReference type="ChEBI" id="CHEBI:11851"/>
        <dbReference type="ChEBI" id="CHEBI:15377"/>
        <dbReference type="ChEBI" id="CHEBI:49072"/>
        <dbReference type="EC" id="4.2.1.9"/>
    </reaction>
    <physiologicalReaction direction="left-to-right" evidence="1">
        <dbReference type="Rhea" id="RHEA:24810"/>
    </physiologicalReaction>
</comment>
<comment type="catalytic activity">
    <reaction evidence="1">
        <text>(2R,3R)-2,3-dihydroxy-3-methylpentanoate = (S)-3-methyl-2-oxopentanoate + H2O</text>
        <dbReference type="Rhea" id="RHEA:27694"/>
        <dbReference type="ChEBI" id="CHEBI:15377"/>
        <dbReference type="ChEBI" id="CHEBI:35146"/>
        <dbReference type="ChEBI" id="CHEBI:49258"/>
        <dbReference type="EC" id="4.2.1.9"/>
    </reaction>
    <physiologicalReaction direction="left-to-right" evidence="1">
        <dbReference type="Rhea" id="RHEA:27695"/>
    </physiologicalReaction>
</comment>
<comment type="cofactor">
    <cofactor evidence="1">
        <name>[2Fe-2S] cluster</name>
        <dbReference type="ChEBI" id="CHEBI:190135"/>
    </cofactor>
    <text evidence="1">Binds 1 [2Fe-2S] cluster per subunit. This cluster acts as a Lewis acid cofactor.</text>
</comment>
<comment type="cofactor">
    <cofactor evidence="1">
        <name>Mg(2+)</name>
        <dbReference type="ChEBI" id="CHEBI:18420"/>
    </cofactor>
</comment>
<comment type="pathway">
    <text evidence="1">Amino-acid biosynthesis; L-isoleucine biosynthesis; L-isoleucine from 2-oxobutanoate: step 3/4.</text>
</comment>
<comment type="pathway">
    <text evidence="1">Amino-acid biosynthesis; L-valine biosynthesis; L-valine from pyruvate: step 3/4.</text>
</comment>
<comment type="subunit">
    <text evidence="1">Homodimer.</text>
</comment>
<comment type="similarity">
    <text evidence="1">Belongs to the IlvD/Edd family.</text>
</comment>
<gene>
    <name evidence="1" type="primary">ilvD</name>
    <name type="ordered locus">rrnAC0302</name>
</gene>
<evidence type="ECO:0000255" key="1">
    <source>
        <dbReference type="HAMAP-Rule" id="MF_00012"/>
    </source>
</evidence>
<evidence type="ECO:0000256" key="2">
    <source>
        <dbReference type="SAM" id="MobiDB-lite"/>
    </source>
</evidence>
<name>ILVD_HALMA</name>
<feature type="chain" id="PRO_0000103538" description="Dihydroxy-acid dehydratase">
    <location>
        <begin position="1"/>
        <end position="575"/>
    </location>
</feature>
<feature type="region of interest" description="Disordered" evidence="2">
    <location>
        <begin position="1"/>
        <end position="27"/>
    </location>
</feature>
<feature type="active site" description="Proton acceptor" evidence="1">
    <location>
        <position position="486"/>
    </location>
</feature>
<feature type="binding site" evidence="1">
    <location>
        <position position="61"/>
    </location>
    <ligand>
        <name>[2Fe-2S] cluster</name>
        <dbReference type="ChEBI" id="CHEBI:190135"/>
    </ligand>
</feature>
<feature type="binding site" evidence="1">
    <location>
        <position position="93"/>
    </location>
    <ligand>
        <name>Mg(2+)</name>
        <dbReference type="ChEBI" id="CHEBI:18420"/>
    </ligand>
</feature>
<feature type="binding site" evidence="1">
    <location>
        <position position="134"/>
    </location>
    <ligand>
        <name>[2Fe-2S] cluster</name>
        <dbReference type="ChEBI" id="CHEBI:190135"/>
    </ligand>
</feature>
<feature type="binding site" evidence="1">
    <location>
        <position position="135"/>
    </location>
    <ligand>
        <name>Mg(2+)</name>
        <dbReference type="ChEBI" id="CHEBI:18420"/>
    </ligand>
</feature>
<feature type="binding site" description="via carbamate group" evidence="1">
    <location>
        <position position="136"/>
    </location>
    <ligand>
        <name>Mg(2+)</name>
        <dbReference type="ChEBI" id="CHEBI:18420"/>
    </ligand>
</feature>
<feature type="binding site" evidence="1">
    <location>
        <position position="206"/>
    </location>
    <ligand>
        <name>[2Fe-2S] cluster</name>
        <dbReference type="ChEBI" id="CHEBI:190135"/>
    </ligand>
</feature>
<feature type="binding site" evidence="1">
    <location>
        <position position="460"/>
    </location>
    <ligand>
        <name>Mg(2+)</name>
        <dbReference type="ChEBI" id="CHEBI:18420"/>
    </ligand>
</feature>
<feature type="modified residue" description="N6-carboxylysine" evidence="1">
    <location>
        <position position="136"/>
    </location>
</feature>
<keyword id="KW-0001">2Fe-2S</keyword>
<keyword id="KW-0028">Amino-acid biosynthesis</keyword>
<keyword id="KW-0100">Branched-chain amino acid biosynthesis</keyword>
<keyword id="KW-0408">Iron</keyword>
<keyword id="KW-0411">Iron-sulfur</keyword>
<keyword id="KW-0456">Lyase</keyword>
<keyword id="KW-0460">Magnesium</keyword>
<keyword id="KW-0479">Metal-binding</keyword>
<keyword id="KW-1185">Reference proteome</keyword>